<gene>
    <name evidence="1" type="primary">plsB</name>
    <name type="ordered locus">STM4235</name>
</gene>
<proteinExistence type="inferred from homology"/>
<organism>
    <name type="scientific">Salmonella typhimurium (strain LT2 / SGSC1412 / ATCC 700720)</name>
    <dbReference type="NCBI Taxonomy" id="99287"/>
    <lineage>
        <taxon>Bacteria</taxon>
        <taxon>Pseudomonadati</taxon>
        <taxon>Pseudomonadota</taxon>
        <taxon>Gammaproteobacteria</taxon>
        <taxon>Enterobacterales</taxon>
        <taxon>Enterobacteriaceae</taxon>
        <taxon>Salmonella</taxon>
    </lineage>
</organism>
<evidence type="ECO:0000255" key="1">
    <source>
        <dbReference type="HAMAP-Rule" id="MF_00393"/>
    </source>
</evidence>
<accession>Q8ZKH9</accession>
<sequence>MSGWPRIYYKLLNLPLSILVKSKSIPAEPAQELGLDTSRPIMYVLPYNSKADLLTLRAQCLAHDLPDPLEPLEIDGALLPRYVFIHGGPRVFTYYTPKEESVKLFHDYLDLHRSNPALDVQMVPVSVMFGRAPGREKGEDNPPLRMLNGVQKFFAISWLGRDSFVRFSPSVSLRRMADEHGTDKIIAQKLARVARMHFARQRLAAVGPRLPARQDLFNKLLASKAIARAVEDEARSKKISHEKAQQNAIALMEEIAANFSYEMIRLTDRILGFTWNRLYQGINVHNAERVRQLAHDGHEIVYVPCHRSHMDYLLLSYVLYHQGLVPPHIAAGINLNFWPAGPIFRRLGAFFIRRTFKGNKLYSTVFREYLGELFSRGYSVEYFVEGGRSRTGRLLDPKTGTLSMTIQAMLRGGTRPITLVPIYIGYEHVMEVGTYAKELRGATKEKESLPQMLKGLSKLRNLGQGYVNFGEPMPLMTYLNQHVPEWRESIDPIEAIRPAWLTPTVNSIAADLMVRINNAGAANAMNLCCTALLASRQRSLTREQLTEQLDCYLDLMRNVPYSTDSTVPAASAGELIAHALQMNKFEVEKDTIGDIIILPREQAVLMTYYRNNIAHMLIMPSLMAAIITQHRRISRDALQQHVEALYPMLKAELFLRWEREELASVIDALASEMQRQGLITLQDDELHINPTHSRTLQLLAAGARETLQRYAITFWLLSANPSINRSTLEKESRTVAQRLSVLHGINAPEFFDKAVFSSLVLTLRDEGYISDTGDAEPAETMKIYQMLADLITSDVRLTIESATQGE</sequence>
<dbReference type="EC" id="2.3.1.15" evidence="1"/>
<dbReference type="EMBL" id="AE006468">
    <property type="protein sequence ID" value="AAL23059.1"/>
    <property type="molecule type" value="Genomic_DNA"/>
</dbReference>
<dbReference type="RefSeq" id="NP_463100.1">
    <property type="nucleotide sequence ID" value="NC_003197.2"/>
</dbReference>
<dbReference type="RefSeq" id="WP_000017360.1">
    <property type="nucleotide sequence ID" value="NC_003197.2"/>
</dbReference>
<dbReference type="SMR" id="Q8ZKH9"/>
<dbReference type="STRING" id="99287.STM4235"/>
<dbReference type="PaxDb" id="99287-STM4235"/>
<dbReference type="GeneID" id="1255761"/>
<dbReference type="KEGG" id="stm:STM4235"/>
<dbReference type="PATRIC" id="fig|99287.12.peg.4455"/>
<dbReference type="HOGENOM" id="CLU_015407_0_0_6"/>
<dbReference type="PhylomeDB" id="Q8ZKH9"/>
<dbReference type="BioCyc" id="SENT99287:STM4235-MONOMER"/>
<dbReference type="UniPathway" id="UPA00557">
    <property type="reaction ID" value="UER00612"/>
</dbReference>
<dbReference type="Proteomes" id="UP000001014">
    <property type="component" value="Chromosome"/>
</dbReference>
<dbReference type="GO" id="GO:0005886">
    <property type="term" value="C:plasma membrane"/>
    <property type="evidence" value="ECO:0007669"/>
    <property type="project" value="UniProtKB-SubCell"/>
</dbReference>
<dbReference type="GO" id="GO:0004366">
    <property type="term" value="F:glycerol-3-phosphate O-acyltransferase activity"/>
    <property type="evidence" value="ECO:0000318"/>
    <property type="project" value="GO_Central"/>
</dbReference>
<dbReference type="GO" id="GO:0016024">
    <property type="term" value="P:CDP-diacylglycerol biosynthetic process"/>
    <property type="evidence" value="ECO:0007669"/>
    <property type="project" value="UniProtKB-UniRule"/>
</dbReference>
<dbReference type="GO" id="GO:0006631">
    <property type="term" value="P:fatty acid metabolic process"/>
    <property type="evidence" value="ECO:0000318"/>
    <property type="project" value="GO_Central"/>
</dbReference>
<dbReference type="GO" id="GO:0008654">
    <property type="term" value="P:phospholipid biosynthetic process"/>
    <property type="evidence" value="ECO:0000318"/>
    <property type="project" value="GO_Central"/>
</dbReference>
<dbReference type="CDD" id="cd07993">
    <property type="entry name" value="LPLAT_DHAPAT-like"/>
    <property type="match status" value="1"/>
</dbReference>
<dbReference type="HAMAP" id="MF_00393">
    <property type="entry name" value="Glyc3P_acyltrans"/>
    <property type="match status" value="1"/>
</dbReference>
<dbReference type="InterPro" id="IPR022284">
    <property type="entry name" value="GPAT/DHAPAT"/>
</dbReference>
<dbReference type="InterPro" id="IPR045520">
    <property type="entry name" value="GPAT/DHAPAT_C"/>
</dbReference>
<dbReference type="InterPro" id="IPR041728">
    <property type="entry name" value="GPAT/DHAPAT_LPLAT"/>
</dbReference>
<dbReference type="InterPro" id="IPR028354">
    <property type="entry name" value="GPAT_PlsB"/>
</dbReference>
<dbReference type="InterPro" id="IPR002123">
    <property type="entry name" value="Plipid/glycerol_acylTrfase"/>
</dbReference>
<dbReference type="NCBIfam" id="TIGR03703">
    <property type="entry name" value="plsB"/>
    <property type="match status" value="1"/>
</dbReference>
<dbReference type="NCBIfam" id="NF003441">
    <property type="entry name" value="PRK04974.1"/>
    <property type="match status" value="1"/>
</dbReference>
<dbReference type="PANTHER" id="PTHR12563:SF17">
    <property type="entry name" value="DIHYDROXYACETONE PHOSPHATE ACYLTRANSFERASE"/>
    <property type="match status" value="1"/>
</dbReference>
<dbReference type="PANTHER" id="PTHR12563">
    <property type="entry name" value="GLYCEROL-3-PHOSPHATE ACYLTRANSFERASE"/>
    <property type="match status" value="1"/>
</dbReference>
<dbReference type="Pfam" id="PF01553">
    <property type="entry name" value="Acyltransferase"/>
    <property type="match status" value="1"/>
</dbReference>
<dbReference type="Pfam" id="PF19277">
    <property type="entry name" value="GPAT_C"/>
    <property type="match status" value="1"/>
</dbReference>
<dbReference type="PIRSF" id="PIRSF500064">
    <property type="entry name" value="GPAT"/>
    <property type="match status" value="1"/>
</dbReference>
<dbReference type="PIRSF" id="PIRSF000437">
    <property type="entry name" value="GPAT_DHAPAT"/>
    <property type="match status" value="1"/>
</dbReference>
<dbReference type="SMART" id="SM00563">
    <property type="entry name" value="PlsC"/>
    <property type="match status" value="1"/>
</dbReference>
<dbReference type="SUPFAM" id="SSF69593">
    <property type="entry name" value="Glycerol-3-phosphate (1)-acyltransferase"/>
    <property type="match status" value="1"/>
</dbReference>
<protein>
    <recommendedName>
        <fullName evidence="1">Glycerol-3-phosphate acyltransferase</fullName>
        <shortName evidence="1">GPAT</shortName>
        <ecNumber evidence="1">2.3.1.15</ecNumber>
    </recommendedName>
</protein>
<reference key="1">
    <citation type="journal article" date="2001" name="Nature">
        <title>Complete genome sequence of Salmonella enterica serovar Typhimurium LT2.</title>
        <authorList>
            <person name="McClelland M."/>
            <person name="Sanderson K.E."/>
            <person name="Spieth J."/>
            <person name="Clifton S.W."/>
            <person name="Latreille P."/>
            <person name="Courtney L."/>
            <person name="Porwollik S."/>
            <person name="Ali J."/>
            <person name="Dante M."/>
            <person name="Du F."/>
            <person name="Hou S."/>
            <person name="Layman D."/>
            <person name="Leonard S."/>
            <person name="Nguyen C."/>
            <person name="Scott K."/>
            <person name="Holmes A."/>
            <person name="Grewal N."/>
            <person name="Mulvaney E."/>
            <person name="Ryan E."/>
            <person name="Sun H."/>
            <person name="Florea L."/>
            <person name="Miller W."/>
            <person name="Stoneking T."/>
            <person name="Nhan M."/>
            <person name="Waterston R."/>
            <person name="Wilson R.K."/>
        </authorList>
    </citation>
    <scope>NUCLEOTIDE SEQUENCE [LARGE SCALE GENOMIC DNA]</scope>
    <source>
        <strain>LT2 / SGSC1412 / ATCC 700720</strain>
    </source>
</reference>
<keyword id="KW-0012">Acyltransferase</keyword>
<keyword id="KW-0997">Cell inner membrane</keyword>
<keyword id="KW-1003">Cell membrane</keyword>
<keyword id="KW-0444">Lipid biosynthesis</keyword>
<keyword id="KW-0443">Lipid metabolism</keyword>
<keyword id="KW-0472">Membrane</keyword>
<keyword id="KW-0594">Phospholipid biosynthesis</keyword>
<keyword id="KW-1208">Phospholipid metabolism</keyword>
<keyword id="KW-1185">Reference proteome</keyword>
<keyword id="KW-0808">Transferase</keyword>
<comment type="catalytic activity">
    <reaction evidence="1">
        <text>sn-glycerol 3-phosphate + an acyl-CoA = a 1-acyl-sn-glycero-3-phosphate + CoA</text>
        <dbReference type="Rhea" id="RHEA:15325"/>
        <dbReference type="ChEBI" id="CHEBI:57287"/>
        <dbReference type="ChEBI" id="CHEBI:57597"/>
        <dbReference type="ChEBI" id="CHEBI:57970"/>
        <dbReference type="ChEBI" id="CHEBI:58342"/>
        <dbReference type="EC" id="2.3.1.15"/>
    </reaction>
</comment>
<comment type="pathway">
    <text evidence="1">Phospholipid metabolism; CDP-diacylglycerol biosynthesis; CDP-diacylglycerol from sn-glycerol 3-phosphate: step 1/3.</text>
</comment>
<comment type="subcellular location">
    <subcellularLocation>
        <location evidence="1">Cell inner membrane</location>
        <topology evidence="1">Peripheral membrane protein</topology>
        <orientation evidence="1">Cytoplasmic side</orientation>
    </subcellularLocation>
</comment>
<comment type="domain">
    <text evidence="1">The HXXXXD motif is essential for acyltransferase activity and may constitute the binding site for the phosphate moiety of the glycerol-3-phosphate.</text>
</comment>
<comment type="similarity">
    <text evidence="1">Belongs to the GPAT/DAPAT family.</text>
</comment>
<name>PLSB_SALTY</name>
<feature type="chain" id="PRO_0000195232" description="Glycerol-3-phosphate acyltransferase">
    <location>
        <begin position="1"/>
        <end position="806"/>
    </location>
</feature>
<feature type="short sequence motif" description="HXXXXD motif">
    <location>
        <begin position="306"/>
        <end position="311"/>
    </location>
</feature>